<sequence length="177" mass="19412">MSEFVTVARPYAKAAFDFAVEHQSVERWQDMLAFAAEVTKNEQMAELLSGALAPETLAESFIAVCGEQLDENGQNLIRVMAENNRLNALPDVLEQFIHLRAASEATSEVEVTSATALSEEQLSKISAAMEKRLSRKVKLNCKIDKSVMAGVIIRAGDMVIDGSVRGRLERLADVLQS</sequence>
<accession>A9MXA9</accession>
<reference key="1">
    <citation type="submission" date="2007-11" db="EMBL/GenBank/DDBJ databases">
        <authorList>
            <consortium name="The Salmonella enterica serovar Paratyphi B Genome Sequencing Project"/>
            <person name="McClelland M."/>
            <person name="Sanderson E.K."/>
            <person name="Porwollik S."/>
            <person name="Spieth J."/>
            <person name="Clifton W.S."/>
            <person name="Fulton R."/>
            <person name="Cordes M."/>
            <person name="Wollam A."/>
            <person name="Shah N."/>
            <person name="Pepin K."/>
            <person name="Bhonagiri V."/>
            <person name="Nash W."/>
            <person name="Johnson M."/>
            <person name="Thiruvilangam P."/>
            <person name="Wilson R."/>
        </authorList>
    </citation>
    <scope>NUCLEOTIDE SEQUENCE [LARGE SCALE GENOMIC DNA]</scope>
    <source>
        <strain>ATCC BAA-1250 / SPB7</strain>
    </source>
</reference>
<feature type="chain" id="PRO_0000371121" description="ATP synthase subunit delta">
    <location>
        <begin position="1"/>
        <end position="177"/>
    </location>
</feature>
<organism>
    <name type="scientific">Salmonella paratyphi B (strain ATCC BAA-1250 / SPB7)</name>
    <dbReference type="NCBI Taxonomy" id="1016998"/>
    <lineage>
        <taxon>Bacteria</taxon>
        <taxon>Pseudomonadati</taxon>
        <taxon>Pseudomonadota</taxon>
        <taxon>Gammaproteobacteria</taxon>
        <taxon>Enterobacterales</taxon>
        <taxon>Enterobacteriaceae</taxon>
        <taxon>Salmonella</taxon>
    </lineage>
</organism>
<name>ATPD_SALPB</name>
<protein>
    <recommendedName>
        <fullName evidence="1">ATP synthase subunit delta</fullName>
    </recommendedName>
    <alternativeName>
        <fullName evidence="1">ATP synthase F(1) sector subunit delta</fullName>
    </alternativeName>
    <alternativeName>
        <fullName evidence="1">F-type ATPase subunit delta</fullName>
        <shortName evidence="1">F-ATPase subunit delta</shortName>
    </alternativeName>
</protein>
<keyword id="KW-0066">ATP synthesis</keyword>
<keyword id="KW-0997">Cell inner membrane</keyword>
<keyword id="KW-1003">Cell membrane</keyword>
<keyword id="KW-0139">CF(1)</keyword>
<keyword id="KW-0375">Hydrogen ion transport</keyword>
<keyword id="KW-0406">Ion transport</keyword>
<keyword id="KW-0472">Membrane</keyword>
<keyword id="KW-0813">Transport</keyword>
<gene>
    <name evidence="1" type="primary">atpH</name>
    <name type="ordered locus">SPAB_04809</name>
</gene>
<evidence type="ECO:0000255" key="1">
    <source>
        <dbReference type="HAMAP-Rule" id="MF_01416"/>
    </source>
</evidence>
<dbReference type="EMBL" id="CP000886">
    <property type="protein sequence ID" value="ABX70120.1"/>
    <property type="molecule type" value="Genomic_DNA"/>
</dbReference>
<dbReference type="RefSeq" id="WP_001288957.1">
    <property type="nucleotide sequence ID" value="NC_010102.1"/>
</dbReference>
<dbReference type="SMR" id="A9MXA9"/>
<dbReference type="KEGG" id="spq:SPAB_04809"/>
<dbReference type="PATRIC" id="fig|1016998.12.peg.4524"/>
<dbReference type="HOGENOM" id="CLU_085114_3_0_6"/>
<dbReference type="BioCyc" id="SENT1016998:SPAB_RS19530-MONOMER"/>
<dbReference type="Proteomes" id="UP000008556">
    <property type="component" value="Chromosome"/>
</dbReference>
<dbReference type="GO" id="GO:0005886">
    <property type="term" value="C:plasma membrane"/>
    <property type="evidence" value="ECO:0007669"/>
    <property type="project" value="UniProtKB-SubCell"/>
</dbReference>
<dbReference type="GO" id="GO:0045259">
    <property type="term" value="C:proton-transporting ATP synthase complex"/>
    <property type="evidence" value="ECO:0007669"/>
    <property type="project" value="UniProtKB-KW"/>
</dbReference>
<dbReference type="GO" id="GO:0046933">
    <property type="term" value="F:proton-transporting ATP synthase activity, rotational mechanism"/>
    <property type="evidence" value="ECO:0007669"/>
    <property type="project" value="UniProtKB-UniRule"/>
</dbReference>
<dbReference type="FunFam" id="1.10.520.20:FF:000001">
    <property type="entry name" value="ATP synthase subunit delta"/>
    <property type="match status" value="1"/>
</dbReference>
<dbReference type="Gene3D" id="1.10.520.20">
    <property type="entry name" value="N-terminal domain of the delta subunit of the F1F0-ATP synthase"/>
    <property type="match status" value="1"/>
</dbReference>
<dbReference type="HAMAP" id="MF_01416">
    <property type="entry name" value="ATP_synth_delta_bact"/>
    <property type="match status" value="1"/>
</dbReference>
<dbReference type="InterPro" id="IPR026015">
    <property type="entry name" value="ATP_synth_OSCP/delta_N_sf"/>
</dbReference>
<dbReference type="InterPro" id="IPR020781">
    <property type="entry name" value="ATPase_OSCP/d_CS"/>
</dbReference>
<dbReference type="InterPro" id="IPR000711">
    <property type="entry name" value="ATPase_OSCP/dsu"/>
</dbReference>
<dbReference type="NCBIfam" id="TIGR01145">
    <property type="entry name" value="ATP_synt_delta"/>
    <property type="match status" value="1"/>
</dbReference>
<dbReference type="NCBIfam" id="NF004402">
    <property type="entry name" value="PRK05758.2-2"/>
    <property type="match status" value="1"/>
</dbReference>
<dbReference type="NCBIfam" id="NF004404">
    <property type="entry name" value="PRK05758.2-5"/>
    <property type="match status" value="1"/>
</dbReference>
<dbReference type="PANTHER" id="PTHR11910">
    <property type="entry name" value="ATP SYNTHASE DELTA CHAIN"/>
    <property type="match status" value="1"/>
</dbReference>
<dbReference type="Pfam" id="PF00213">
    <property type="entry name" value="OSCP"/>
    <property type="match status" value="1"/>
</dbReference>
<dbReference type="PRINTS" id="PR00125">
    <property type="entry name" value="ATPASEDELTA"/>
</dbReference>
<dbReference type="SUPFAM" id="SSF47928">
    <property type="entry name" value="N-terminal domain of the delta subunit of the F1F0-ATP synthase"/>
    <property type="match status" value="1"/>
</dbReference>
<dbReference type="PROSITE" id="PS00389">
    <property type="entry name" value="ATPASE_DELTA"/>
    <property type="match status" value="1"/>
</dbReference>
<proteinExistence type="inferred from homology"/>
<comment type="function">
    <text evidence="1">F(1)F(0) ATP synthase produces ATP from ADP in the presence of a proton or sodium gradient. F-type ATPases consist of two structural domains, F(1) containing the extramembraneous catalytic core and F(0) containing the membrane proton channel, linked together by a central stalk and a peripheral stalk. During catalysis, ATP synthesis in the catalytic domain of F(1) is coupled via a rotary mechanism of the central stalk subunits to proton translocation.</text>
</comment>
<comment type="function">
    <text evidence="1">This protein is part of the stalk that links CF(0) to CF(1). It either transmits conformational changes from CF(0) to CF(1) or is implicated in proton conduction.</text>
</comment>
<comment type="subunit">
    <text evidence="1">F-type ATPases have 2 components, F(1) - the catalytic core - and F(0) - the membrane proton channel. F(1) has five subunits: alpha(3), beta(3), gamma(1), delta(1), epsilon(1). F(0) has three main subunits: a(1), b(2) and c(10-14). The alpha and beta chains form an alternating ring which encloses part of the gamma chain. F(1) is attached to F(0) by a central stalk formed by the gamma and epsilon chains, while a peripheral stalk is formed by the delta and b chains.</text>
</comment>
<comment type="subcellular location">
    <subcellularLocation>
        <location evidence="1">Cell inner membrane</location>
        <topology evidence="1">Peripheral membrane protein</topology>
    </subcellularLocation>
</comment>
<comment type="similarity">
    <text evidence="1">Belongs to the ATPase delta chain family.</text>
</comment>